<comment type="function">
    <text evidence="1">This protein binds to 23S rRNA in the presence of protein L20.</text>
</comment>
<comment type="subunit">
    <text evidence="1">Part of the 50S ribosomal subunit. Contacts protein L20.</text>
</comment>
<comment type="similarity">
    <text evidence="1">Belongs to the bacterial ribosomal protein bL21 family.</text>
</comment>
<dbReference type="EMBL" id="D87916">
    <property type="protein sequence ID" value="BAA13499.1"/>
    <property type="molecule type" value="Genomic_DNA"/>
</dbReference>
<dbReference type="RefSeq" id="WP_003969204.1">
    <property type="nucleotide sequence ID" value="NZ_UAVD01000011.1"/>
</dbReference>
<dbReference type="SMR" id="P95756"/>
<dbReference type="STRING" id="1911.GCA_001715295_04042"/>
<dbReference type="GeneID" id="87631662"/>
<dbReference type="OMA" id="HRQPFTK"/>
<dbReference type="OrthoDB" id="9813334at2"/>
<dbReference type="GO" id="GO:0005737">
    <property type="term" value="C:cytoplasm"/>
    <property type="evidence" value="ECO:0007669"/>
    <property type="project" value="UniProtKB-ARBA"/>
</dbReference>
<dbReference type="GO" id="GO:1990904">
    <property type="term" value="C:ribonucleoprotein complex"/>
    <property type="evidence" value="ECO:0007669"/>
    <property type="project" value="UniProtKB-KW"/>
</dbReference>
<dbReference type="GO" id="GO:0005840">
    <property type="term" value="C:ribosome"/>
    <property type="evidence" value="ECO:0007669"/>
    <property type="project" value="UniProtKB-KW"/>
</dbReference>
<dbReference type="GO" id="GO:0019843">
    <property type="term" value="F:rRNA binding"/>
    <property type="evidence" value="ECO:0007669"/>
    <property type="project" value="UniProtKB-UniRule"/>
</dbReference>
<dbReference type="GO" id="GO:0003735">
    <property type="term" value="F:structural constituent of ribosome"/>
    <property type="evidence" value="ECO:0007669"/>
    <property type="project" value="InterPro"/>
</dbReference>
<dbReference type="GO" id="GO:0006412">
    <property type="term" value="P:translation"/>
    <property type="evidence" value="ECO:0007669"/>
    <property type="project" value="UniProtKB-UniRule"/>
</dbReference>
<dbReference type="HAMAP" id="MF_01363">
    <property type="entry name" value="Ribosomal_bL21"/>
    <property type="match status" value="1"/>
</dbReference>
<dbReference type="InterPro" id="IPR028909">
    <property type="entry name" value="bL21-like"/>
</dbReference>
<dbReference type="InterPro" id="IPR036164">
    <property type="entry name" value="bL21-like_sf"/>
</dbReference>
<dbReference type="InterPro" id="IPR001787">
    <property type="entry name" value="Ribosomal_bL21"/>
</dbReference>
<dbReference type="InterPro" id="IPR018258">
    <property type="entry name" value="Ribosomal_bL21_CS"/>
</dbReference>
<dbReference type="NCBIfam" id="TIGR00061">
    <property type="entry name" value="L21"/>
    <property type="match status" value="1"/>
</dbReference>
<dbReference type="PANTHER" id="PTHR21349">
    <property type="entry name" value="50S RIBOSOMAL PROTEIN L21"/>
    <property type="match status" value="1"/>
</dbReference>
<dbReference type="PANTHER" id="PTHR21349:SF0">
    <property type="entry name" value="LARGE RIBOSOMAL SUBUNIT PROTEIN BL21M"/>
    <property type="match status" value="1"/>
</dbReference>
<dbReference type="Pfam" id="PF00829">
    <property type="entry name" value="Ribosomal_L21p"/>
    <property type="match status" value="1"/>
</dbReference>
<dbReference type="SUPFAM" id="SSF141091">
    <property type="entry name" value="L21p-like"/>
    <property type="match status" value="1"/>
</dbReference>
<dbReference type="PROSITE" id="PS01169">
    <property type="entry name" value="RIBOSOMAL_L21"/>
    <property type="match status" value="1"/>
</dbReference>
<keyword id="KW-0687">Ribonucleoprotein</keyword>
<keyword id="KW-0689">Ribosomal protein</keyword>
<keyword id="KW-0694">RNA-binding</keyword>
<keyword id="KW-0699">rRNA-binding</keyword>
<sequence>MYAIVRSGGRQHKVAVGDIVEVDKISTAKVGDTVELSTLLVVDGDAVTSDPWVLDGIKVTAEIVDHHKGAKIDILRYKNKTGYRRRQGHRQQYTAIKVTGIPAAAK</sequence>
<feature type="chain" id="PRO_0000181013" description="Large ribosomal subunit protein bL21">
    <location>
        <begin position="1"/>
        <end position="106"/>
    </location>
</feature>
<evidence type="ECO:0000255" key="1">
    <source>
        <dbReference type="HAMAP-Rule" id="MF_01363"/>
    </source>
</evidence>
<evidence type="ECO:0000305" key="2"/>
<reference key="1">
    <citation type="journal article" date="1997" name="J. Bacteriol.">
        <title>Molecular cloning and characterization of the obg gene of Streptomyces griseus in relation to the onset of morphological differentiation.</title>
        <authorList>
            <person name="Okamoto S."/>
            <person name="Itoh M."/>
            <person name="Ochi K."/>
        </authorList>
    </citation>
    <scope>NUCLEOTIDE SEQUENCE [GENOMIC DNA]</scope>
    <source>
        <strain>ATCC 11984 / NBRC 13189 / SL-842</strain>
    </source>
</reference>
<organism>
    <name type="scientific">Streptomyces griseus</name>
    <dbReference type="NCBI Taxonomy" id="1911"/>
    <lineage>
        <taxon>Bacteria</taxon>
        <taxon>Bacillati</taxon>
        <taxon>Actinomycetota</taxon>
        <taxon>Actinomycetes</taxon>
        <taxon>Kitasatosporales</taxon>
        <taxon>Streptomycetaceae</taxon>
        <taxon>Streptomyces</taxon>
    </lineage>
</organism>
<name>RL21_STRGR</name>
<proteinExistence type="inferred from homology"/>
<protein>
    <recommendedName>
        <fullName evidence="1">Large ribosomal subunit protein bL21</fullName>
    </recommendedName>
    <alternativeName>
        <fullName evidence="2">50S ribosomal protein L21</fullName>
    </alternativeName>
</protein>
<gene>
    <name evidence="1" type="primary">rplU</name>
</gene>
<accession>P95756</accession>